<name>PYRC_ACIB3</name>
<protein>
    <recommendedName>
        <fullName evidence="1">Dihydroorotase</fullName>
        <shortName evidence="1">DHOase</shortName>
        <ecNumber evidence="1">3.5.2.3</ecNumber>
    </recommendedName>
</protein>
<feature type="chain" id="PRO_1000193064" description="Dihydroorotase">
    <location>
        <begin position="1"/>
        <end position="344"/>
    </location>
</feature>
<feature type="active site" evidence="1">
    <location>
        <position position="247"/>
    </location>
</feature>
<feature type="binding site" evidence="1">
    <location>
        <position position="13"/>
    </location>
    <ligand>
        <name>Zn(2+)</name>
        <dbReference type="ChEBI" id="CHEBI:29105"/>
        <label>1</label>
    </ligand>
</feature>
<feature type="binding site" evidence="1">
    <location>
        <begin position="15"/>
        <end position="17"/>
    </location>
    <ligand>
        <name>substrate</name>
    </ligand>
</feature>
<feature type="binding site" evidence="1">
    <location>
        <position position="15"/>
    </location>
    <ligand>
        <name>Zn(2+)</name>
        <dbReference type="ChEBI" id="CHEBI:29105"/>
        <label>1</label>
    </ligand>
</feature>
<feature type="binding site" evidence="1">
    <location>
        <position position="41"/>
    </location>
    <ligand>
        <name>substrate</name>
    </ligand>
</feature>
<feature type="binding site" description="via carbamate group" evidence="1">
    <location>
        <position position="99"/>
    </location>
    <ligand>
        <name>Zn(2+)</name>
        <dbReference type="ChEBI" id="CHEBI:29105"/>
        <label>1</label>
    </ligand>
</feature>
<feature type="binding site" description="via carbamate group" evidence="1">
    <location>
        <position position="99"/>
    </location>
    <ligand>
        <name>Zn(2+)</name>
        <dbReference type="ChEBI" id="CHEBI:29105"/>
        <label>2</label>
    </ligand>
</feature>
<feature type="binding site" evidence="1">
    <location>
        <position position="136"/>
    </location>
    <ligand>
        <name>substrate</name>
    </ligand>
</feature>
<feature type="binding site" evidence="1">
    <location>
        <position position="136"/>
    </location>
    <ligand>
        <name>Zn(2+)</name>
        <dbReference type="ChEBI" id="CHEBI:29105"/>
        <label>2</label>
    </ligand>
</feature>
<feature type="binding site" evidence="1">
    <location>
        <position position="174"/>
    </location>
    <ligand>
        <name>Zn(2+)</name>
        <dbReference type="ChEBI" id="CHEBI:29105"/>
        <label>2</label>
    </ligand>
</feature>
<feature type="binding site" evidence="1">
    <location>
        <position position="219"/>
    </location>
    <ligand>
        <name>substrate</name>
    </ligand>
</feature>
<feature type="binding site" evidence="1">
    <location>
        <position position="247"/>
    </location>
    <ligand>
        <name>Zn(2+)</name>
        <dbReference type="ChEBI" id="CHEBI:29105"/>
        <label>1</label>
    </ligand>
</feature>
<feature type="binding site" evidence="1">
    <location>
        <position position="251"/>
    </location>
    <ligand>
        <name>substrate</name>
    </ligand>
</feature>
<feature type="binding site" evidence="1">
    <location>
        <position position="263"/>
    </location>
    <ligand>
        <name>substrate</name>
    </ligand>
</feature>
<feature type="modified residue" description="N6-carboxylysine" evidence="1">
    <location>
        <position position="99"/>
    </location>
</feature>
<proteinExistence type="inferred from homology"/>
<gene>
    <name evidence="1" type="primary">pyrC</name>
    <name type="ordered locus">ABBFA_002478</name>
</gene>
<sequence>MNSITLLQPDDWHAHLRDGLALKRTVPDLAKQFARAICMPNLVPPVKTVEEALAYRERILAHVPEGNNFDPRMVLYFTDHTSPDEVRKIKESEHVNAIKLYPAGATTNSDNGVSDIRKVYAVIEQLEEHQVPLLLHGEVTHNHVDIFDREKRFLDEVLSPLLKQFPKLKVVLEHITTSDAAHFVLEQDRNVAATITPQHLLFNRNDMLVGGIKPHFYCLPILKRQTHQTTLLEVATSGNPKFFLGTDSAPHAQNAKENACGCAGCYSAPNAIELYAQAFDQVGKLERLEGFASHFGADFYGLPRNTSTITLVKEDNLVPESFDYLDNQKIIPLHAGKTLQWRKV</sequence>
<reference key="1">
    <citation type="journal article" date="2008" name="J. Bacteriol.">
        <title>Comparative genome sequence analysis of multidrug-resistant Acinetobacter baumannii.</title>
        <authorList>
            <person name="Adams M.D."/>
            <person name="Goglin K."/>
            <person name="Molyneaux N."/>
            <person name="Hujer K.M."/>
            <person name="Lavender H."/>
            <person name="Jamison J.J."/>
            <person name="MacDonald I.J."/>
            <person name="Martin K.M."/>
            <person name="Russo T."/>
            <person name="Campagnari A.A."/>
            <person name="Hujer A.M."/>
            <person name="Bonomo R.A."/>
            <person name="Gill S.R."/>
        </authorList>
    </citation>
    <scope>NUCLEOTIDE SEQUENCE [LARGE SCALE GENOMIC DNA]</scope>
    <source>
        <strain>AB307-0294</strain>
    </source>
</reference>
<dbReference type="EC" id="3.5.2.3" evidence="1"/>
<dbReference type="EMBL" id="CP001172">
    <property type="protein sequence ID" value="ACJ59280.1"/>
    <property type="molecule type" value="Genomic_DNA"/>
</dbReference>
<dbReference type="RefSeq" id="WP_001084867.1">
    <property type="nucleotide sequence ID" value="NZ_CP001172.1"/>
</dbReference>
<dbReference type="SMR" id="B7GX48"/>
<dbReference type="MEROPS" id="M38.A02"/>
<dbReference type="GeneID" id="92795645"/>
<dbReference type="HOGENOM" id="CLU_041558_1_0_6"/>
<dbReference type="UniPathway" id="UPA00070">
    <property type="reaction ID" value="UER00117"/>
</dbReference>
<dbReference type="Proteomes" id="UP000006924">
    <property type="component" value="Chromosome"/>
</dbReference>
<dbReference type="GO" id="GO:0005829">
    <property type="term" value="C:cytosol"/>
    <property type="evidence" value="ECO:0007669"/>
    <property type="project" value="TreeGrafter"/>
</dbReference>
<dbReference type="GO" id="GO:0004151">
    <property type="term" value="F:dihydroorotase activity"/>
    <property type="evidence" value="ECO:0007669"/>
    <property type="project" value="UniProtKB-UniRule"/>
</dbReference>
<dbReference type="GO" id="GO:0008270">
    <property type="term" value="F:zinc ion binding"/>
    <property type="evidence" value="ECO:0007669"/>
    <property type="project" value="UniProtKB-UniRule"/>
</dbReference>
<dbReference type="GO" id="GO:0006207">
    <property type="term" value="P:'de novo' pyrimidine nucleobase biosynthetic process"/>
    <property type="evidence" value="ECO:0007669"/>
    <property type="project" value="TreeGrafter"/>
</dbReference>
<dbReference type="GO" id="GO:0044205">
    <property type="term" value="P:'de novo' UMP biosynthetic process"/>
    <property type="evidence" value="ECO:0007669"/>
    <property type="project" value="UniProtKB-UniRule"/>
</dbReference>
<dbReference type="CDD" id="cd01294">
    <property type="entry name" value="DHOase"/>
    <property type="match status" value="1"/>
</dbReference>
<dbReference type="FunFam" id="3.20.20.140:FF:000006">
    <property type="entry name" value="Dihydroorotase"/>
    <property type="match status" value="1"/>
</dbReference>
<dbReference type="Gene3D" id="3.20.20.140">
    <property type="entry name" value="Metal-dependent hydrolases"/>
    <property type="match status" value="1"/>
</dbReference>
<dbReference type="HAMAP" id="MF_00219">
    <property type="entry name" value="PyrC_classII"/>
    <property type="match status" value="1"/>
</dbReference>
<dbReference type="InterPro" id="IPR006680">
    <property type="entry name" value="Amidohydro-rel"/>
</dbReference>
<dbReference type="InterPro" id="IPR004721">
    <property type="entry name" value="DHOdimr"/>
</dbReference>
<dbReference type="InterPro" id="IPR002195">
    <property type="entry name" value="Dihydroorotase_CS"/>
</dbReference>
<dbReference type="InterPro" id="IPR032466">
    <property type="entry name" value="Metal_Hydrolase"/>
</dbReference>
<dbReference type="NCBIfam" id="TIGR00856">
    <property type="entry name" value="pyrC_dimer"/>
    <property type="match status" value="1"/>
</dbReference>
<dbReference type="PANTHER" id="PTHR43137">
    <property type="entry name" value="DIHYDROOROTASE"/>
    <property type="match status" value="1"/>
</dbReference>
<dbReference type="PANTHER" id="PTHR43137:SF1">
    <property type="entry name" value="DIHYDROOROTASE"/>
    <property type="match status" value="1"/>
</dbReference>
<dbReference type="Pfam" id="PF01979">
    <property type="entry name" value="Amidohydro_1"/>
    <property type="match status" value="1"/>
</dbReference>
<dbReference type="PIRSF" id="PIRSF001237">
    <property type="entry name" value="DHOdimr"/>
    <property type="match status" value="1"/>
</dbReference>
<dbReference type="SUPFAM" id="SSF51556">
    <property type="entry name" value="Metallo-dependent hydrolases"/>
    <property type="match status" value="1"/>
</dbReference>
<dbReference type="PROSITE" id="PS00482">
    <property type="entry name" value="DIHYDROOROTASE_1"/>
    <property type="match status" value="1"/>
</dbReference>
<dbReference type="PROSITE" id="PS00483">
    <property type="entry name" value="DIHYDROOROTASE_2"/>
    <property type="match status" value="1"/>
</dbReference>
<evidence type="ECO:0000255" key="1">
    <source>
        <dbReference type="HAMAP-Rule" id="MF_00219"/>
    </source>
</evidence>
<keyword id="KW-0378">Hydrolase</keyword>
<keyword id="KW-0479">Metal-binding</keyword>
<keyword id="KW-0665">Pyrimidine biosynthesis</keyword>
<keyword id="KW-0862">Zinc</keyword>
<accession>B7GX48</accession>
<comment type="function">
    <text evidence="1">Catalyzes the reversible cyclization of carbamoyl aspartate to dihydroorotate.</text>
</comment>
<comment type="catalytic activity">
    <reaction evidence="1">
        <text>(S)-dihydroorotate + H2O = N-carbamoyl-L-aspartate + H(+)</text>
        <dbReference type="Rhea" id="RHEA:24296"/>
        <dbReference type="ChEBI" id="CHEBI:15377"/>
        <dbReference type="ChEBI" id="CHEBI:15378"/>
        <dbReference type="ChEBI" id="CHEBI:30864"/>
        <dbReference type="ChEBI" id="CHEBI:32814"/>
        <dbReference type="EC" id="3.5.2.3"/>
    </reaction>
</comment>
<comment type="cofactor">
    <cofactor evidence="1">
        <name>Zn(2+)</name>
        <dbReference type="ChEBI" id="CHEBI:29105"/>
    </cofactor>
    <text evidence="1">Binds 2 Zn(2+) ions per subunit.</text>
</comment>
<comment type="pathway">
    <text evidence="1">Pyrimidine metabolism; UMP biosynthesis via de novo pathway; (S)-dihydroorotate from bicarbonate: step 3/3.</text>
</comment>
<comment type="subunit">
    <text evidence="1">Homodimer.</text>
</comment>
<comment type="similarity">
    <text evidence="1">Belongs to the metallo-dependent hydrolases superfamily. DHOase family. Class II DHOase subfamily.</text>
</comment>
<organism>
    <name type="scientific">Acinetobacter baumannii (strain AB307-0294)</name>
    <dbReference type="NCBI Taxonomy" id="557600"/>
    <lineage>
        <taxon>Bacteria</taxon>
        <taxon>Pseudomonadati</taxon>
        <taxon>Pseudomonadota</taxon>
        <taxon>Gammaproteobacteria</taxon>
        <taxon>Moraxellales</taxon>
        <taxon>Moraxellaceae</taxon>
        <taxon>Acinetobacter</taxon>
        <taxon>Acinetobacter calcoaceticus/baumannii complex</taxon>
    </lineage>
</organism>